<feature type="chain" id="PRO_0000084284" description="Probable JmjC domain-containing histone demethylation protein 2C">
    <location>
        <begin position="1"/>
        <end position="2540"/>
    </location>
</feature>
<feature type="domain" description="JmjC" evidence="4">
    <location>
        <begin position="2274"/>
        <end position="2498"/>
    </location>
</feature>
<feature type="zinc finger region" description="C6-type" evidence="3">
    <location>
        <begin position="1846"/>
        <end position="1871"/>
    </location>
</feature>
<feature type="region of interest" description="Disordered" evidence="5">
    <location>
        <begin position="278"/>
        <end position="478"/>
    </location>
</feature>
<feature type="region of interest" description="Disordered" evidence="5">
    <location>
        <begin position="631"/>
        <end position="656"/>
    </location>
</feature>
<feature type="region of interest" description="Disordered" evidence="5">
    <location>
        <begin position="1242"/>
        <end position="1263"/>
    </location>
</feature>
<feature type="region of interest" description="Disordered" evidence="5">
    <location>
        <begin position="1614"/>
        <end position="1692"/>
    </location>
</feature>
<feature type="region of interest" description="Disordered" evidence="5">
    <location>
        <begin position="1971"/>
        <end position="2064"/>
    </location>
</feature>
<feature type="short sequence motif" description="LXXLL motif">
    <location>
        <begin position="2066"/>
        <end position="2070"/>
    </location>
</feature>
<feature type="compositionally biased region" description="Polar residues" evidence="5">
    <location>
        <begin position="278"/>
        <end position="309"/>
    </location>
</feature>
<feature type="compositionally biased region" description="Basic and acidic residues" evidence="5">
    <location>
        <begin position="323"/>
        <end position="342"/>
    </location>
</feature>
<feature type="compositionally biased region" description="Basic residues" evidence="5">
    <location>
        <begin position="343"/>
        <end position="353"/>
    </location>
</feature>
<feature type="compositionally biased region" description="Basic and acidic residues" evidence="5">
    <location>
        <begin position="354"/>
        <end position="371"/>
    </location>
</feature>
<feature type="compositionally biased region" description="Low complexity" evidence="5">
    <location>
        <begin position="373"/>
        <end position="382"/>
    </location>
</feature>
<feature type="compositionally biased region" description="Basic and acidic residues" evidence="5">
    <location>
        <begin position="383"/>
        <end position="403"/>
    </location>
</feature>
<feature type="compositionally biased region" description="Basic and acidic residues" evidence="5">
    <location>
        <begin position="410"/>
        <end position="427"/>
    </location>
</feature>
<feature type="compositionally biased region" description="Basic and acidic residues" evidence="5">
    <location>
        <begin position="438"/>
        <end position="452"/>
    </location>
</feature>
<feature type="compositionally biased region" description="Polar residues" evidence="5">
    <location>
        <begin position="464"/>
        <end position="478"/>
    </location>
</feature>
<feature type="compositionally biased region" description="Basic residues" evidence="5">
    <location>
        <begin position="1643"/>
        <end position="1652"/>
    </location>
</feature>
<feature type="compositionally biased region" description="Basic and acidic residues" evidence="5">
    <location>
        <begin position="1653"/>
        <end position="1669"/>
    </location>
</feature>
<feature type="compositionally biased region" description="Polar residues" evidence="5">
    <location>
        <begin position="1971"/>
        <end position="1991"/>
    </location>
</feature>
<feature type="compositionally biased region" description="Basic and acidic residues" evidence="5">
    <location>
        <begin position="2016"/>
        <end position="2043"/>
    </location>
</feature>
<feature type="compositionally biased region" description="Polar residues" evidence="5">
    <location>
        <begin position="2045"/>
        <end position="2064"/>
    </location>
</feature>
<feature type="binding site" evidence="4">
    <location>
        <position position="2336"/>
    </location>
    <ligand>
        <name>Fe cation</name>
        <dbReference type="ChEBI" id="CHEBI:24875"/>
        <note>catalytic</note>
    </ligand>
</feature>
<feature type="binding site" evidence="4">
    <location>
        <position position="2338"/>
    </location>
    <ligand>
        <name>Fe cation</name>
        <dbReference type="ChEBI" id="CHEBI:24875"/>
        <note>catalytic</note>
    </ligand>
</feature>
<feature type="binding site" evidence="4">
    <location>
        <position position="2466"/>
    </location>
    <ligand>
        <name>Fe cation</name>
        <dbReference type="ChEBI" id="CHEBI:24875"/>
        <note>catalytic</note>
    </ligand>
</feature>
<feature type="modified residue" description="Phosphoserine" evidence="12 14">
    <location>
        <position position="317"/>
    </location>
</feature>
<feature type="modified residue" description="Phosphoserine" evidence="2">
    <location>
        <position position="320"/>
    </location>
</feature>
<feature type="modified residue" description="Phosphoserine" evidence="11 12">
    <location>
        <position position="373"/>
    </location>
</feature>
<feature type="modified residue" description="Phosphoserine" evidence="11">
    <location>
        <position position="376"/>
    </location>
</feature>
<feature type="modified residue" description="Phosphoserine" evidence="2">
    <location>
        <position position="475"/>
    </location>
</feature>
<feature type="modified residue" description="Phosphoserine" evidence="13">
    <location>
        <position position="501"/>
    </location>
</feature>
<feature type="modified residue" description="Phosphothreonine" evidence="13">
    <location>
        <position position="505"/>
    </location>
</feature>
<feature type="modified residue" description="Phosphoserine" evidence="13">
    <location>
        <position position="601"/>
    </location>
</feature>
<feature type="modified residue" description="Phosphoserine" evidence="12">
    <location>
        <position position="617"/>
    </location>
</feature>
<feature type="modified residue" description="Phosphoserine" evidence="12">
    <location>
        <position position="638"/>
    </location>
</feature>
<feature type="modified residue" description="Phosphoserine" evidence="13">
    <location>
        <position position="639"/>
    </location>
</feature>
<feature type="modified residue" description="Phosphoserine" evidence="11 12 13">
    <location>
        <position position="641"/>
    </location>
</feature>
<feature type="modified residue" description="Phosphoserine" evidence="12">
    <location>
        <position position="652"/>
    </location>
</feature>
<feature type="modified residue" description="Phosphoserine" evidence="13">
    <location>
        <position position="943"/>
    </location>
</feature>
<feature type="modified residue" description="Phosphoserine" evidence="12">
    <location>
        <position position="1989"/>
    </location>
</feature>
<feature type="cross-link" description="Glycyl lysine isopeptide (Lys-Gly) (interchain with G-Cter in SUMO2)" evidence="15">
    <location>
        <position position="2132"/>
    </location>
</feature>
<feature type="cross-link" description="Glycyl lysine isopeptide (Lys-Gly) (interchain with G-Cter in SUMO2)" evidence="15">
    <location>
        <position position="2136"/>
    </location>
</feature>
<feature type="splice variant" id="VSP_018303" description="In isoform 2." evidence="9">
    <location>
        <begin position="1"/>
        <end position="219"/>
    </location>
</feature>
<feature type="splice variant" id="VSP_043909" description="In isoform 3." evidence="8">
    <location>
        <begin position="1"/>
        <end position="182"/>
    </location>
</feature>
<feature type="splice variant" id="VSP_018304" description="In isoform 2." evidence="9">
    <original>TGIPRSVL</original>
    <variation>SCHLVKTE</variation>
    <location>
        <begin position="1692"/>
        <end position="1699"/>
    </location>
</feature>
<feature type="splice variant" id="VSP_018305" description="In isoform 2." evidence="9">
    <location>
        <begin position="1700"/>
        <end position="2540"/>
    </location>
</feature>
<feature type="sequence variant" id="VAR_049654" description="In dbSNP:rs34798625.">
    <original>A</original>
    <variation>T</variation>
    <location>
        <position position="272"/>
    </location>
</feature>
<feature type="sequence variant" id="VAR_049655" description="In dbSNP:rs35380596.">
    <original>E</original>
    <variation>D</variation>
    <location>
        <position position="394"/>
    </location>
</feature>
<feature type="sequence variant" id="VAR_049656" description="In dbSNP:rs10761725." evidence="6">
    <original>S</original>
    <variation>T</variation>
    <location>
        <position position="464"/>
    </location>
</feature>
<feature type="sequence variant" id="VAR_061277" description="In dbSNP:rs41274072.">
    <original>M</original>
    <variation>V</variation>
    <location>
        <position position="591"/>
    </location>
</feature>
<feature type="sequence variant" id="VAR_049657" description="In dbSNP:rs9703886.">
    <original>N</original>
    <variation>Y</variation>
    <location>
        <position position="1393"/>
    </location>
</feature>
<feature type="sequence variant" id="VAR_049658" description="In dbSNP:rs34491125.">
    <original>D</original>
    <variation>E</variation>
    <location>
        <position position="2400"/>
    </location>
</feature>
<feature type="sequence variant" id="VAR_049659" description="In dbSNP:rs1935." evidence="6">
    <original>E</original>
    <variation>D</variation>
    <location>
        <position position="2535"/>
    </location>
</feature>
<feature type="sequence conflict" description="In Ref. 2; CAD97921." evidence="10" ref="2">
    <original>T</original>
    <variation>A</variation>
    <location>
        <position position="488"/>
    </location>
</feature>
<feature type="sequence conflict" description="In Ref. 2; CAD97921." evidence="10" ref="2">
    <original>T</original>
    <variation>A</variation>
    <location>
        <position position="779"/>
    </location>
</feature>
<feature type="sequence conflict" description="In Ref. 2; CAD97921." evidence="10" ref="2">
    <original>T</original>
    <variation>P</variation>
    <location>
        <position position="783"/>
    </location>
</feature>
<feature type="sequence conflict" description="In Ref. 6; AAC41741." evidence="10" ref="6">
    <original>S</original>
    <variation>A</variation>
    <location>
        <position position="2093"/>
    </location>
</feature>
<feature type="sequence conflict" description="In Ref. 5; BAA92618." evidence="10" ref="5">
    <location>
        <position position="2148"/>
    </location>
</feature>
<feature type="strand" evidence="17">
    <location>
        <begin position="2159"/>
        <end position="2162"/>
    </location>
</feature>
<feature type="turn" evidence="17">
    <location>
        <begin position="2163"/>
        <end position="2166"/>
    </location>
</feature>
<feature type="strand" evidence="17">
    <location>
        <begin position="2167"/>
        <end position="2170"/>
    </location>
</feature>
<feature type="helix" evidence="17">
    <location>
        <begin position="2178"/>
        <end position="2186"/>
    </location>
</feature>
<feature type="turn" evidence="17">
    <location>
        <begin position="2187"/>
        <end position="2189"/>
    </location>
</feature>
<feature type="strand" evidence="17">
    <location>
        <begin position="2192"/>
        <end position="2194"/>
    </location>
</feature>
<feature type="helix" evidence="17">
    <location>
        <begin position="2197"/>
        <end position="2199"/>
    </location>
</feature>
<feature type="helix" evidence="17">
    <location>
        <begin position="2203"/>
        <end position="2206"/>
    </location>
</feature>
<feature type="helix" evidence="17">
    <location>
        <begin position="2208"/>
        <end position="2215"/>
    </location>
</feature>
<feature type="turn" evidence="17">
    <location>
        <begin position="2225"/>
        <end position="2228"/>
    </location>
</feature>
<feature type="helix" evidence="17">
    <location>
        <begin position="2235"/>
        <end position="2240"/>
    </location>
</feature>
<feature type="turn" evidence="16">
    <location>
        <begin position="2241"/>
        <end position="2243"/>
    </location>
</feature>
<feature type="helix" evidence="17">
    <location>
        <begin position="2245"/>
        <end position="2247"/>
    </location>
</feature>
<feature type="strand" evidence="17">
    <location>
        <begin position="2259"/>
        <end position="2261"/>
    </location>
</feature>
<feature type="strand" evidence="17">
    <location>
        <begin position="2263"/>
        <end position="2266"/>
    </location>
</feature>
<feature type="helix" evidence="17">
    <location>
        <begin position="2267"/>
        <end position="2273"/>
    </location>
</feature>
<feature type="helix" evidence="17">
    <location>
        <begin position="2275"/>
        <end position="2284"/>
    </location>
</feature>
<feature type="helix" evidence="17">
    <location>
        <begin position="2288"/>
        <end position="2291"/>
    </location>
</feature>
<feature type="turn" evidence="17">
    <location>
        <begin position="2300"/>
        <end position="2302"/>
    </location>
</feature>
<feature type="helix" evidence="16">
    <location>
        <begin position="2305"/>
        <end position="2307"/>
    </location>
</feature>
<feature type="strand" evidence="17">
    <location>
        <begin position="2315"/>
        <end position="2319"/>
    </location>
</feature>
<feature type="turn" evidence="17">
    <location>
        <begin position="2323"/>
        <end position="2326"/>
    </location>
</feature>
<feature type="strand" evidence="17">
    <location>
        <begin position="2332"/>
        <end position="2337"/>
    </location>
</feature>
<feature type="strand" evidence="17">
    <location>
        <begin position="2342"/>
        <end position="2350"/>
    </location>
</feature>
<feature type="helix" evidence="17">
    <location>
        <begin position="2360"/>
        <end position="2368"/>
    </location>
</feature>
<feature type="helix" evidence="17">
    <location>
        <begin position="2374"/>
        <end position="2380"/>
    </location>
</feature>
<feature type="strand" evidence="17">
    <location>
        <begin position="2387"/>
        <end position="2394"/>
    </location>
</feature>
<feature type="helix" evidence="17">
    <location>
        <begin position="2396"/>
        <end position="2398"/>
    </location>
</feature>
<feature type="helix" evidence="17">
    <location>
        <begin position="2399"/>
        <end position="2412"/>
    </location>
</feature>
<feature type="helix" evidence="17">
    <location>
        <begin position="2423"/>
        <end position="2426"/>
    </location>
</feature>
<feature type="helix" evidence="17">
    <location>
        <begin position="2433"/>
        <end position="2443"/>
    </location>
</feature>
<feature type="strand" evidence="17">
    <location>
        <begin position="2448"/>
        <end position="2453"/>
    </location>
</feature>
<feature type="strand" evidence="17">
    <location>
        <begin position="2457"/>
        <end position="2460"/>
    </location>
</feature>
<feature type="strand" evidence="17">
    <location>
        <begin position="2465"/>
        <end position="2479"/>
    </location>
</feature>
<feature type="helix" evidence="16">
    <location>
        <begin position="2484"/>
        <end position="2486"/>
    </location>
</feature>
<feature type="strand" evidence="17">
    <location>
        <begin position="2489"/>
        <end position="2492"/>
    </location>
</feature>
<feature type="turn" evidence="17">
    <location>
        <begin position="2493"/>
        <end position="2495"/>
    </location>
</feature>
<feature type="strand" evidence="17">
    <location>
        <begin position="2496"/>
        <end position="2499"/>
    </location>
</feature>
<proteinExistence type="evidence at protein level"/>
<organism>
    <name type="scientific">Homo sapiens</name>
    <name type="common">Human</name>
    <dbReference type="NCBI Taxonomy" id="9606"/>
    <lineage>
        <taxon>Eukaryota</taxon>
        <taxon>Metazoa</taxon>
        <taxon>Chordata</taxon>
        <taxon>Craniata</taxon>
        <taxon>Vertebrata</taxon>
        <taxon>Euteleostomi</taxon>
        <taxon>Mammalia</taxon>
        <taxon>Eutheria</taxon>
        <taxon>Euarchontoglires</taxon>
        <taxon>Primates</taxon>
        <taxon>Haplorrhini</taxon>
        <taxon>Catarrhini</taxon>
        <taxon>Hominidae</taxon>
        <taxon>Homo</taxon>
    </lineage>
</organism>
<comment type="function">
    <text evidence="1">Probable histone demethylase that specifically demethylates 'Lys-9' of histone H3, thereby playing a central role in histone code. Demethylation of Lys residue generates formaldehyde and succinate. May be involved in hormone-dependent transcriptional activation, by participating in recruitment to androgen-receptor target genes (By similarity).</text>
</comment>
<comment type="cofactor">
    <cofactor evidence="1">
        <name>Fe(2+)</name>
        <dbReference type="ChEBI" id="CHEBI:29033"/>
    </cofactor>
    <text evidence="1">Binds 1 Fe(2+) ion per subunit.</text>
</comment>
<comment type="subunit">
    <text evidence="7">Interacts specifically with the ligand-binding domain of the thyroid receptor (TR). Requires the presence of thyroid hormone for its interaction.</text>
</comment>
<comment type="interaction">
    <interactant intactId="EBI-1224969">
        <id>Q15652</id>
    </interactant>
    <interactant intactId="EBI-608057">
        <id>P10275</id>
        <label>AR</label>
    </interactant>
    <organismsDiffer>false</organismsDiffer>
    <experiments>4</experiments>
</comment>
<comment type="subcellular location">
    <subcellularLocation>
        <location evidence="1">Nucleus</location>
    </subcellularLocation>
</comment>
<comment type="alternative products">
    <event type="alternative splicing"/>
    <isoform>
        <id>Q15652-1</id>
        <name>1</name>
        <sequence type="displayed"/>
    </isoform>
    <isoform>
        <id>Q15652-2</id>
        <name>2</name>
        <sequence type="described" ref="VSP_018303 VSP_018304 VSP_018305"/>
    </isoform>
    <isoform>
        <id>Q15652-3</id>
        <name>3</name>
        <name>s-JMJD1C</name>
        <sequence type="described" ref="VSP_043909"/>
    </isoform>
</comment>
<comment type="domain">
    <text evidence="1">Leu-Xaa-Xaa-Leu-Leu (LXXLL) motifs are known to mediate the association with nuclear receptors.</text>
</comment>
<comment type="miscellaneous">
    <molecule>Isoform 3</molecule>
    <text evidence="10">May function as a tumor suppressor, reduced expression in breast cancer tumors.</text>
</comment>
<comment type="similarity">
    <text evidence="10">Belongs to the JHDM2 histone demethylase family.</text>
</comment>
<comment type="sequence caution" evidence="10">
    <conflict type="frameshift">
        <sequence resource="EMBL-CDS" id="AAC41741"/>
    </conflict>
</comment>
<comment type="sequence caution" evidence="10">
    <conflict type="frameshift">
        <sequence resource="EMBL-CDS" id="CAD97921"/>
    </conflict>
</comment>
<reference key="1">
    <citation type="journal article" date="2007" name="Arch. Biochem. Biophys.">
        <title>A novel variant of the putative demethylase gene, s-JMJD1C, is a coactivator of the AR.</title>
        <authorList>
            <person name="Wolf S.S."/>
            <person name="Patchev V.K."/>
            <person name="Obendorf M."/>
        </authorList>
    </citation>
    <scope>NUCLEOTIDE SEQUENCE [MRNA] (ISOFORM 3)</scope>
</reference>
<reference key="2">
    <citation type="journal article" date="2007" name="BMC Genomics">
        <title>The full-ORF clone resource of the German cDNA consortium.</title>
        <authorList>
            <person name="Bechtel S."/>
            <person name="Rosenfelder H."/>
            <person name="Duda A."/>
            <person name="Schmidt C.P."/>
            <person name="Ernst U."/>
            <person name="Wellenreuther R."/>
            <person name="Mehrle A."/>
            <person name="Schuster C."/>
            <person name="Bahr A."/>
            <person name="Bloecker H."/>
            <person name="Heubner D."/>
            <person name="Hoerlein A."/>
            <person name="Michel G."/>
            <person name="Wedler H."/>
            <person name="Koehrer K."/>
            <person name="Ottenwaelder B."/>
            <person name="Poustka A."/>
            <person name="Wiemann S."/>
            <person name="Schupp I."/>
        </authorList>
    </citation>
    <scope>NUCLEOTIDE SEQUENCE [LARGE SCALE MRNA] (ISOFORM 2)</scope>
    <scope>NUCLEOTIDE SEQUENCE [LARGE SCALE MRNA] OF 379-2540</scope>
    <scope>VARIANTS THR-464 AND ASP-2535</scope>
    <source>
        <tissue>Amygdala</tissue>
        <tissue>Cervix</tissue>
    </source>
</reference>
<reference key="3">
    <citation type="journal article" date="2004" name="Nature">
        <title>The DNA sequence and comparative analysis of human chromosome 10.</title>
        <authorList>
            <person name="Deloukas P."/>
            <person name="Earthrowl M.E."/>
            <person name="Grafham D.V."/>
            <person name="Rubenfield M."/>
            <person name="French L."/>
            <person name="Steward C.A."/>
            <person name="Sims S.K."/>
            <person name="Jones M.C."/>
            <person name="Searle S."/>
            <person name="Scott C."/>
            <person name="Howe K."/>
            <person name="Hunt S.E."/>
            <person name="Andrews T.D."/>
            <person name="Gilbert J.G.R."/>
            <person name="Swarbreck D."/>
            <person name="Ashurst J.L."/>
            <person name="Taylor A."/>
            <person name="Battles J."/>
            <person name="Bird C.P."/>
            <person name="Ainscough R."/>
            <person name="Almeida J.P."/>
            <person name="Ashwell R.I.S."/>
            <person name="Ambrose K.D."/>
            <person name="Babbage A.K."/>
            <person name="Bagguley C.L."/>
            <person name="Bailey J."/>
            <person name="Banerjee R."/>
            <person name="Bates K."/>
            <person name="Beasley H."/>
            <person name="Bray-Allen S."/>
            <person name="Brown A.J."/>
            <person name="Brown J.Y."/>
            <person name="Burford D.C."/>
            <person name="Burrill W."/>
            <person name="Burton J."/>
            <person name="Cahill P."/>
            <person name="Camire D."/>
            <person name="Carter N.P."/>
            <person name="Chapman J.C."/>
            <person name="Clark S.Y."/>
            <person name="Clarke G."/>
            <person name="Clee C.M."/>
            <person name="Clegg S."/>
            <person name="Corby N."/>
            <person name="Coulson A."/>
            <person name="Dhami P."/>
            <person name="Dutta I."/>
            <person name="Dunn M."/>
            <person name="Faulkner L."/>
            <person name="Frankish A."/>
            <person name="Frankland J.A."/>
            <person name="Garner P."/>
            <person name="Garnett J."/>
            <person name="Gribble S."/>
            <person name="Griffiths C."/>
            <person name="Grocock R."/>
            <person name="Gustafson E."/>
            <person name="Hammond S."/>
            <person name="Harley J.L."/>
            <person name="Hart E."/>
            <person name="Heath P.D."/>
            <person name="Ho T.P."/>
            <person name="Hopkins B."/>
            <person name="Horne J."/>
            <person name="Howden P.J."/>
            <person name="Huckle E."/>
            <person name="Hynds C."/>
            <person name="Johnson C."/>
            <person name="Johnson D."/>
            <person name="Kana A."/>
            <person name="Kay M."/>
            <person name="Kimberley A.M."/>
            <person name="Kershaw J.K."/>
            <person name="Kokkinaki M."/>
            <person name="Laird G.K."/>
            <person name="Lawlor S."/>
            <person name="Lee H.M."/>
            <person name="Leongamornlert D.A."/>
            <person name="Laird G."/>
            <person name="Lloyd C."/>
            <person name="Lloyd D.M."/>
            <person name="Loveland J."/>
            <person name="Lovell J."/>
            <person name="McLaren S."/>
            <person name="McLay K.E."/>
            <person name="McMurray A."/>
            <person name="Mashreghi-Mohammadi M."/>
            <person name="Matthews L."/>
            <person name="Milne S."/>
            <person name="Nickerson T."/>
            <person name="Nguyen M."/>
            <person name="Overton-Larty E."/>
            <person name="Palmer S.A."/>
            <person name="Pearce A.V."/>
            <person name="Peck A.I."/>
            <person name="Pelan S."/>
            <person name="Phillimore B."/>
            <person name="Porter K."/>
            <person name="Rice C.M."/>
            <person name="Rogosin A."/>
            <person name="Ross M.T."/>
            <person name="Sarafidou T."/>
            <person name="Sehra H.K."/>
            <person name="Shownkeen R."/>
            <person name="Skuce C.D."/>
            <person name="Smith M."/>
            <person name="Standring L."/>
            <person name="Sycamore N."/>
            <person name="Tester J."/>
            <person name="Thorpe A."/>
            <person name="Torcasso W."/>
            <person name="Tracey A."/>
            <person name="Tromans A."/>
            <person name="Tsolas J."/>
            <person name="Wall M."/>
            <person name="Walsh J."/>
            <person name="Wang H."/>
            <person name="Weinstock K."/>
            <person name="West A.P."/>
            <person name="Willey D.L."/>
            <person name="Whitehead S.L."/>
            <person name="Wilming L."/>
            <person name="Wray P.W."/>
            <person name="Young L."/>
            <person name="Chen Y."/>
            <person name="Lovering R.C."/>
            <person name="Moschonas N.K."/>
            <person name="Siebert R."/>
            <person name="Fechtel K."/>
            <person name="Bentley D."/>
            <person name="Durbin R.M."/>
            <person name="Hubbard T."/>
            <person name="Doucette-Stamm L."/>
            <person name="Beck S."/>
            <person name="Smith D.R."/>
            <person name="Rogers J."/>
        </authorList>
    </citation>
    <scope>NUCLEOTIDE SEQUENCE [LARGE SCALE GENOMIC DNA]</scope>
</reference>
<reference key="4">
    <citation type="journal article" date="2004" name="Nat. Genet.">
        <title>Complete sequencing and characterization of 21,243 full-length human cDNAs.</title>
        <authorList>
            <person name="Ota T."/>
            <person name="Suzuki Y."/>
            <person name="Nishikawa T."/>
            <person name="Otsuki T."/>
            <person name="Sugiyama T."/>
            <person name="Irie R."/>
            <person name="Wakamatsu A."/>
            <person name="Hayashi K."/>
            <person name="Sato H."/>
            <person name="Nagai K."/>
            <person name="Kimura K."/>
            <person name="Makita H."/>
            <person name="Sekine M."/>
            <person name="Obayashi M."/>
            <person name="Nishi T."/>
            <person name="Shibahara T."/>
            <person name="Tanaka T."/>
            <person name="Ishii S."/>
            <person name="Yamamoto J."/>
            <person name="Saito K."/>
            <person name="Kawai Y."/>
            <person name="Isono Y."/>
            <person name="Nakamura Y."/>
            <person name="Nagahari K."/>
            <person name="Murakami K."/>
            <person name="Yasuda T."/>
            <person name="Iwayanagi T."/>
            <person name="Wagatsuma M."/>
            <person name="Shiratori A."/>
            <person name="Sudo H."/>
            <person name="Hosoiri T."/>
            <person name="Kaku Y."/>
            <person name="Kodaira H."/>
            <person name="Kondo H."/>
            <person name="Sugawara M."/>
            <person name="Takahashi M."/>
            <person name="Kanda K."/>
            <person name="Yokoi T."/>
            <person name="Furuya T."/>
            <person name="Kikkawa E."/>
            <person name="Omura Y."/>
            <person name="Abe K."/>
            <person name="Kamihara K."/>
            <person name="Katsuta N."/>
            <person name="Sato K."/>
            <person name="Tanikawa M."/>
            <person name="Yamazaki M."/>
            <person name="Ninomiya K."/>
            <person name="Ishibashi T."/>
            <person name="Yamashita H."/>
            <person name="Murakawa K."/>
            <person name="Fujimori K."/>
            <person name="Tanai H."/>
            <person name="Kimata M."/>
            <person name="Watanabe M."/>
            <person name="Hiraoka S."/>
            <person name="Chiba Y."/>
            <person name="Ishida S."/>
            <person name="Ono Y."/>
            <person name="Takiguchi S."/>
            <person name="Watanabe S."/>
            <person name="Yosida M."/>
            <person name="Hotuta T."/>
            <person name="Kusano J."/>
            <person name="Kanehori K."/>
            <person name="Takahashi-Fujii A."/>
            <person name="Hara H."/>
            <person name="Tanase T.-O."/>
            <person name="Nomura Y."/>
            <person name="Togiya S."/>
            <person name="Komai F."/>
            <person name="Hara R."/>
            <person name="Takeuchi K."/>
            <person name="Arita M."/>
            <person name="Imose N."/>
            <person name="Musashino K."/>
            <person name="Yuuki H."/>
            <person name="Oshima A."/>
            <person name="Sasaki N."/>
            <person name="Aotsuka S."/>
            <person name="Yoshikawa Y."/>
            <person name="Matsunawa H."/>
            <person name="Ichihara T."/>
            <person name="Shiohata N."/>
            <person name="Sano S."/>
            <person name="Moriya S."/>
            <person name="Momiyama H."/>
            <person name="Satoh N."/>
            <person name="Takami S."/>
            <person name="Terashima Y."/>
            <person name="Suzuki O."/>
            <person name="Nakagawa S."/>
            <person name="Senoh A."/>
            <person name="Mizoguchi H."/>
            <person name="Goto Y."/>
            <person name="Shimizu F."/>
            <person name="Wakebe H."/>
            <person name="Hishigaki H."/>
            <person name="Watanabe T."/>
            <person name="Sugiyama A."/>
            <person name="Takemoto M."/>
            <person name="Kawakami B."/>
            <person name="Yamazaki M."/>
            <person name="Watanabe K."/>
            <person name="Kumagai A."/>
            <person name="Itakura S."/>
            <person name="Fukuzumi Y."/>
            <person name="Fujimori Y."/>
            <person name="Komiyama M."/>
            <person name="Tashiro H."/>
            <person name="Tanigami A."/>
            <person name="Fujiwara T."/>
            <person name="Ono T."/>
            <person name="Yamada K."/>
            <person name="Fujii Y."/>
            <person name="Ozaki K."/>
            <person name="Hirao M."/>
            <person name="Ohmori Y."/>
            <person name="Kawabata A."/>
            <person name="Hikiji T."/>
            <person name="Kobatake N."/>
            <person name="Inagaki H."/>
            <person name="Ikema Y."/>
            <person name="Okamoto S."/>
            <person name="Okitani R."/>
            <person name="Kawakami T."/>
            <person name="Noguchi S."/>
            <person name="Itoh T."/>
            <person name="Shigeta K."/>
            <person name="Senba T."/>
            <person name="Matsumura K."/>
            <person name="Nakajima Y."/>
            <person name="Mizuno T."/>
            <person name="Morinaga M."/>
            <person name="Sasaki M."/>
            <person name="Togashi T."/>
            <person name="Oyama M."/>
            <person name="Hata H."/>
            <person name="Watanabe M."/>
            <person name="Komatsu T."/>
            <person name="Mizushima-Sugano J."/>
            <person name="Satoh T."/>
            <person name="Shirai Y."/>
            <person name="Takahashi Y."/>
            <person name="Nakagawa K."/>
            <person name="Okumura K."/>
            <person name="Nagase T."/>
            <person name="Nomura N."/>
            <person name="Kikuchi H."/>
            <person name="Masuho Y."/>
            <person name="Yamashita R."/>
            <person name="Nakai K."/>
            <person name="Yada T."/>
            <person name="Nakamura Y."/>
            <person name="Ohara O."/>
            <person name="Isogai T."/>
            <person name="Sugano S."/>
        </authorList>
    </citation>
    <scope>NUCLEOTIDE SEQUENCE [LARGE SCALE MRNA] OF 1-427</scope>
    <source>
        <tissue>Embryo</tissue>
    </source>
</reference>
<reference key="5">
    <citation type="journal article" date="2000" name="DNA Res.">
        <title>Prediction of the coding sequences of unidentified human genes. XVI. The complete sequences of 150 new cDNA clones from brain which code for large proteins in vitro.</title>
        <authorList>
            <person name="Nagase T."/>
            <person name="Kikuno R."/>
            <person name="Ishikawa K."/>
            <person name="Hirosawa M."/>
            <person name="Ohara O."/>
        </authorList>
    </citation>
    <scope>NUCLEOTIDE SEQUENCE [LARGE SCALE MRNA] OF 1275-2540</scope>
    <source>
        <tissue>Brain</tissue>
    </source>
</reference>
<reference key="6">
    <citation type="journal article" date="1995" name="Mol. Endocrinol.">
        <title>Two classes of proteins dependent on either the presence or absence of thyroid hormone for interaction with the thyroid hormone receptor.</title>
        <authorList>
            <person name="Lee J.W."/>
            <person name="Choi H.-S."/>
            <person name="Gyuris J."/>
            <person name="Brent R."/>
            <person name="Moore D.D."/>
        </authorList>
    </citation>
    <scope>NUCLEOTIDE SEQUENCE [MRNA] OF 2030-2212</scope>
    <scope>INTERACTION WITH THYROID RECEPTOR</scope>
</reference>
<reference key="7">
    <citation type="journal article" date="2003" name="Int. J. Mol. Med.">
        <title>Identification and characterization of TRIP8 gene in silico.</title>
        <authorList>
            <person name="Katoh M."/>
            <person name="Katoh M."/>
        </authorList>
    </citation>
    <scope>IDENTIFICATION OF THE GENE</scope>
</reference>
<reference key="8">
    <citation type="journal article" date="2008" name="Proc. Natl. Acad. Sci. U.S.A.">
        <title>A quantitative atlas of mitotic phosphorylation.</title>
        <authorList>
            <person name="Dephoure N."/>
            <person name="Zhou C."/>
            <person name="Villen J."/>
            <person name="Beausoleil S.A."/>
            <person name="Bakalarski C.E."/>
            <person name="Elledge S.J."/>
            <person name="Gygi S.P."/>
        </authorList>
    </citation>
    <scope>PHOSPHORYLATION [LARGE SCALE ANALYSIS] AT SER-373; SER-376 AND SER-641</scope>
    <scope>IDENTIFICATION BY MASS SPECTROMETRY [LARGE SCALE ANALYSIS]</scope>
    <source>
        <tissue>Cervix carcinoma</tissue>
    </source>
</reference>
<reference key="9">
    <citation type="journal article" date="2009" name="Sci. Signal.">
        <title>Quantitative phosphoproteomic analysis of T cell receptor signaling reveals system-wide modulation of protein-protein interactions.</title>
        <authorList>
            <person name="Mayya V."/>
            <person name="Lundgren D.H."/>
            <person name="Hwang S.-I."/>
            <person name="Rezaul K."/>
            <person name="Wu L."/>
            <person name="Eng J.K."/>
            <person name="Rodionov V."/>
            <person name="Han D.K."/>
        </authorList>
    </citation>
    <scope>IDENTIFICATION BY MASS SPECTROMETRY [LARGE SCALE ANALYSIS]</scope>
    <source>
        <tissue>Leukemic T-cell</tissue>
    </source>
</reference>
<reference key="10">
    <citation type="journal article" date="2011" name="Sci. Signal.">
        <title>System-wide temporal characterization of the proteome and phosphoproteome of human embryonic stem cell differentiation.</title>
        <authorList>
            <person name="Rigbolt K.T."/>
            <person name="Prokhorova T.A."/>
            <person name="Akimov V."/>
            <person name="Henningsen J."/>
            <person name="Johansen P.T."/>
            <person name="Kratchmarova I."/>
            <person name="Kassem M."/>
            <person name="Mann M."/>
            <person name="Olsen J.V."/>
            <person name="Blagoev B."/>
        </authorList>
    </citation>
    <scope>PHOSPHORYLATION [LARGE SCALE ANALYSIS] AT SER-317; SER-373; SER-617; SER-638; SER-641; SER-652 AND SER-1989</scope>
    <scope>IDENTIFICATION BY MASS SPECTROMETRY [LARGE SCALE ANALYSIS]</scope>
</reference>
<reference key="11">
    <citation type="journal article" date="2013" name="J. Proteome Res.">
        <title>Toward a comprehensive characterization of a human cancer cell phosphoproteome.</title>
        <authorList>
            <person name="Zhou H."/>
            <person name="Di Palma S."/>
            <person name="Preisinger C."/>
            <person name="Peng M."/>
            <person name="Polat A.N."/>
            <person name="Heck A.J."/>
            <person name="Mohammed S."/>
        </authorList>
    </citation>
    <scope>PHOSPHORYLATION [LARGE SCALE ANALYSIS] AT SER-501; THR-505; SER-601; SER-639; SER-641 AND SER-943</scope>
    <scope>IDENTIFICATION BY MASS SPECTROMETRY [LARGE SCALE ANALYSIS]</scope>
    <source>
        <tissue>Cervix carcinoma</tissue>
        <tissue>Erythroleukemia</tissue>
    </source>
</reference>
<reference key="12">
    <citation type="journal article" date="2014" name="J. Proteomics">
        <title>An enzyme assisted RP-RPLC approach for in-depth analysis of human liver phosphoproteome.</title>
        <authorList>
            <person name="Bian Y."/>
            <person name="Song C."/>
            <person name="Cheng K."/>
            <person name="Dong M."/>
            <person name="Wang F."/>
            <person name="Huang J."/>
            <person name="Sun D."/>
            <person name="Wang L."/>
            <person name="Ye M."/>
            <person name="Zou H."/>
        </authorList>
    </citation>
    <scope>PHOSPHORYLATION [LARGE SCALE ANALYSIS] AT SER-317</scope>
    <scope>IDENTIFICATION BY MASS SPECTROMETRY [LARGE SCALE ANALYSIS]</scope>
    <source>
        <tissue>Liver</tissue>
    </source>
</reference>
<reference key="13">
    <citation type="journal article" date="2017" name="Nat. Struct. Mol. Biol.">
        <title>Site-specific mapping of the human SUMO proteome reveals co-modification with phosphorylation.</title>
        <authorList>
            <person name="Hendriks I.A."/>
            <person name="Lyon D."/>
            <person name="Young C."/>
            <person name="Jensen L.J."/>
            <person name="Vertegaal A.C."/>
            <person name="Nielsen M.L."/>
        </authorList>
    </citation>
    <scope>SUMOYLATION [LARGE SCALE ANALYSIS] AT LYS-2132 AND LYS-2136</scope>
    <scope>IDENTIFICATION BY MASS SPECTROMETRY [LARGE SCALE ANALYSIS]</scope>
</reference>
<dbReference type="EC" id="1.14.11.-"/>
<dbReference type="EMBL" id="EF068222">
    <property type="protein sequence ID" value="ABK64187.1"/>
    <property type="molecule type" value="mRNA"/>
</dbReference>
<dbReference type="EMBL" id="BX537954">
    <property type="protein sequence ID" value="CAD97921.1"/>
    <property type="status" value="ALT_FRAME"/>
    <property type="molecule type" value="mRNA"/>
</dbReference>
<dbReference type="EMBL" id="AC022022">
    <property type="status" value="NOT_ANNOTATED_CDS"/>
    <property type="molecule type" value="Genomic_DNA"/>
</dbReference>
<dbReference type="EMBL" id="AL590502">
    <property type="status" value="NOT_ANNOTATED_CDS"/>
    <property type="molecule type" value="Genomic_DNA"/>
</dbReference>
<dbReference type="EMBL" id="AL607128">
    <property type="status" value="NOT_ANNOTATED_CDS"/>
    <property type="molecule type" value="Genomic_DNA"/>
</dbReference>
<dbReference type="EMBL" id="AL713895">
    <property type="status" value="NOT_ANNOTATED_CDS"/>
    <property type="molecule type" value="Genomic_DNA"/>
</dbReference>
<dbReference type="EMBL" id="AK027280">
    <property type="status" value="NOT_ANNOTATED_CDS"/>
    <property type="molecule type" value="mRNA"/>
</dbReference>
<dbReference type="EMBL" id="AL831917">
    <property type="protein sequence ID" value="CAD38578.1"/>
    <property type="molecule type" value="mRNA"/>
</dbReference>
<dbReference type="EMBL" id="AB037801">
    <property type="protein sequence ID" value="BAA92618.1"/>
    <property type="molecule type" value="mRNA"/>
</dbReference>
<dbReference type="EMBL" id="L40411">
    <property type="protein sequence ID" value="AAC41741.1"/>
    <property type="status" value="ALT_FRAME"/>
    <property type="molecule type" value="mRNA"/>
</dbReference>
<dbReference type="CCDS" id="CCDS41532.1">
    <molecule id="Q15652-1"/>
</dbReference>
<dbReference type="CCDS" id="CCDS60538.1">
    <molecule id="Q15652-3"/>
</dbReference>
<dbReference type="RefSeq" id="NP_001269877.1">
    <molecule id="Q15652-3"/>
    <property type="nucleotide sequence ID" value="NM_001282948.2"/>
</dbReference>
<dbReference type="RefSeq" id="NP_001305082.1">
    <property type="nucleotide sequence ID" value="NM_001318153.1"/>
</dbReference>
<dbReference type="RefSeq" id="NP_001305083.1">
    <molecule id="Q15652-3"/>
    <property type="nucleotide sequence ID" value="NM_001318154.2"/>
</dbReference>
<dbReference type="RefSeq" id="NP_001309181.1">
    <property type="nucleotide sequence ID" value="NM_001322252.1"/>
</dbReference>
<dbReference type="RefSeq" id="NP_001309183.1">
    <property type="nucleotide sequence ID" value="NM_001322254.1"/>
</dbReference>
<dbReference type="RefSeq" id="NP_001309187.1">
    <property type="nucleotide sequence ID" value="NM_001322258.1"/>
</dbReference>
<dbReference type="RefSeq" id="NP_116165.1">
    <molecule id="Q15652-1"/>
    <property type="nucleotide sequence ID" value="NM_032776.3"/>
</dbReference>
<dbReference type="RefSeq" id="XP_016871386.1">
    <molecule id="Q15652-3"/>
    <property type="nucleotide sequence ID" value="XM_017015897.2"/>
</dbReference>
<dbReference type="RefSeq" id="XP_016871387.1">
    <molecule id="Q15652-3"/>
    <property type="nucleotide sequence ID" value="XM_017015898.2"/>
</dbReference>
<dbReference type="RefSeq" id="XP_047280728.1">
    <molecule id="Q15652-3"/>
    <property type="nucleotide sequence ID" value="XM_047424772.1"/>
</dbReference>
<dbReference type="RefSeq" id="XP_047280729.1">
    <molecule id="Q15652-3"/>
    <property type="nucleotide sequence ID" value="XM_047424773.1"/>
</dbReference>
<dbReference type="PDB" id="2YPD">
    <property type="method" value="X-ray"/>
    <property type="resolution" value="2.10 A"/>
    <property type="chains" value="A/B=2157-2540"/>
</dbReference>
<dbReference type="PDB" id="5FZO">
    <property type="method" value="X-ray"/>
    <property type="resolution" value="1.84 A"/>
    <property type="chains" value="A/B=2157-2500"/>
</dbReference>
<dbReference type="PDB" id="9GDK">
    <property type="method" value="X-ray"/>
    <property type="resolution" value="1.78 A"/>
    <property type="chains" value="A/B=2157-2502"/>
</dbReference>
<dbReference type="PDBsum" id="2YPD"/>
<dbReference type="PDBsum" id="5FZO"/>
<dbReference type="PDBsum" id="9GDK"/>
<dbReference type="SMR" id="Q15652"/>
<dbReference type="BioGRID" id="128677">
    <property type="interactions" value="90"/>
</dbReference>
<dbReference type="DIP" id="DIP-38114N"/>
<dbReference type="FunCoup" id="Q15652">
    <property type="interactions" value="3242"/>
</dbReference>
<dbReference type="IntAct" id="Q15652">
    <property type="interactions" value="38"/>
</dbReference>
<dbReference type="MINT" id="Q15652"/>
<dbReference type="STRING" id="9606.ENSP00000382204"/>
<dbReference type="BindingDB" id="Q15652"/>
<dbReference type="ChEMBL" id="CHEMBL3792271"/>
<dbReference type="GlyCosmos" id="Q15652">
    <property type="glycosylation" value="18 sites, 2 glycans"/>
</dbReference>
<dbReference type="GlyGen" id="Q15652">
    <property type="glycosylation" value="41 sites, 2 N-linked glycans (3 sites), 2 O-linked glycans (38 sites)"/>
</dbReference>
<dbReference type="iPTMnet" id="Q15652"/>
<dbReference type="PhosphoSitePlus" id="Q15652"/>
<dbReference type="BioMuta" id="JMJD1C"/>
<dbReference type="DMDM" id="85541650"/>
<dbReference type="jPOST" id="Q15652"/>
<dbReference type="MassIVE" id="Q15652"/>
<dbReference type="PaxDb" id="9606-ENSP00000382204"/>
<dbReference type="PeptideAtlas" id="Q15652"/>
<dbReference type="ProteomicsDB" id="60691">
    <molecule id="Q15652-1"/>
</dbReference>
<dbReference type="ProteomicsDB" id="60692">
    <molecule id="Q15652-2"/>
</dbReference>
<dbReference type="ProteomicsDB" id="60693">
    <molecule id="Q15652-3"/>
</dbReference>
<dbReference type="Pumba" id="Q15652"/>
<dbReference type="Antibodypedia" id="28318">
    <property type="antibodies" value="138 antibodies from 28 providers"/>
</dbReference>
<dbReference type="DNASU" id="221037"/>
<dbReference type="Ensembl" id="ENST00000399262.7">
    <molecule id="Q15652-1"/>
    <property type="protein sequence ID" value="ENSP00000382204.2"/>
    <property type="gene ID" value="ENSG00000171988.20"/>
</dbReference>
<dbReference type="Ensembl" id="ENST00000542921.5">
    <molecule id="Q15652-3"/>
    <property type="protein sequence ID" value="ENSP00000444682.1"/>
    <property type="gene ID" value="ENSG00000171988.20"/>
</dbReference>
<dbReference type="GeneID" id="221037"/>
<dbReference type="KEGG" id="hsa:221037"/>
<dbReference type="MANE-Select" id="ENST00000399262.7">
    <property type="protein sequence ID" value="ENSP00000382204.2"/>
    <property type="RefSeq nucleotide sequence ID" value="NM_032776.3"/>
    <property type="RefSeq protein sequence ID" value="NP_116165.1"/>
</dbReference>
<dbReference type="UCSC" id="uc001jmn.5">
    <molecule id="Q15652-1"/>
    <property type="organism name" value="human"/>
</dbReference>
<dbReference type="AGR" id="HGNC:12313"/>
<dbReference type="CTD" id="221037"/>
<dbReference type="DisGeNET" id="221037"/>
<dbReference type="GeneCards" id="JMJD1C"/>
<dbReference type="HGNC" id="HGNC:12313">
    <property type="gene designation" value="JMJD1C"/>
</dbReference>
<dbReference type="HPA" id="ENSG00000171988">
    <property type="expression patterns" value="Low tissue specificity"/>
</dbReference>
<dbReference type="MalaCards" id="JMJD1C"/>
<dbReference type="MIM" id="604503">
    <property type="type" value="gene"/>
</dbReference>
<dbReference type="neXtProt" id="NX_Q15652"/>
<dbReference type="OpenTargets" id="ENSG00000171988"/>
<dbReference type="Orphanet" id="567">
    <property type="disease" value="22q11.2 deletion syndrome"/>
</dbReference>
<dbReference type="Orphanet" id="91352">
    <property type="disease" value="Germinoma of the central nervous system"/>
</dbReference>
<dbReference type="PharmGKB" id="PA128394767"/>
<dbReference type="VEuPathDB" id="HostDB:ENSG00000171988"/>
<dbReference type="eggNOG" id="KOG1356">
    <property type="taxonomic scope" value="Eukaryota"/>
</dbReference>
<dbReference type="GeneTree" id="ENSGT00940000158210"/>
<dbReference type="HOGENOM" id="CLU_228251_0_0_1"/>
<dbReference type="InParanoid" id="Q15652"/>
<dbReference type="OMA" id="PNKTSKM"/>
<dbReference type="OrthoDB" id="1667110at2759"/>
<dbReference type="PAN-GO" id="Q15652">
    <property type="GO annotations" value="7 GO annotations based on evolutionary models"/>
</dbReference>
<dbReference type="PhylomeDB" id="Q15652"/>
<dbReference type="TreeFam" id="TF324723"/>
<dbReference type="BioCyc" id="MetaCyc:ENSG00000171988-MONOMER"/>
<dbReference type="BRENDA" id="1.14.11.65">
    <property type="organism ID" value="2681"/>
</dbReference>
<dbReference type="PathwayCommons" id="Q15652"/>
<dbReference type="Reactome" id="R-HSA-983231">
    <property type="pathway name" value="Factors involved in megakaryocyte development and platelet production"/>
</dbReference>
<dbReference type="SignaLink" id="Q15652"/>
<dbReference type="SIGNOR" id="Q15652"/>
<dbReference type="BioGRID-ORCS" id="221037">
    <property type="hits" value="34 hits in 1183 CRISPR screens"/>
</dbReference>
<dbReference type="CD-CODE" id="91857CE7">
    <property type="entry name" value="Nucleolus"/>
</dbReference>
<dbReference type="ChiTaRS" id="JMJD1C">
    <property type="organism name" value="human"/>
</dbReference>
<dbReference type="EvolutionaryTrace" id="Q15652"/>
<dbReference type="GenomeRNAi" id="221037"/>
<dbReference type="Pharos" id="Q15652">
    <property type="development level" value="Tbio"/>
</dbReference>
<dbReference type="PRO" id="PR:Q15652"/>
<dbReference type="Proteomes" id="UP000005640">
    <property type="component" value="Chromosome 10"/>
</dbReference>
<dbReference type="RNAct" id="Q15652">
    <property type="molecule type" value="protein"/>
</dbReference>
<dbReference type="Bgee" id="ENSG00000171988">
    <property type="expression patterns" value="Expressed in calcaneal tendon and 202 other cell types or tissues"/>
</dbReference>
<dbReference type="ExpressionAtlas" id="Q15652">
    <property type="expression patterns" value="baseline and differential"/>
</dbReference>
<dbReference type="GO" id="GO:0000785">
    <property type="term" value="C:chromatin"/>
    <property type="evidence" value="ECO:0000318"/>
    <property type="project" value="GO_Central"/>
</dbReference>
<dbReference type="GO" id="GO:0000118">
    <property type="term" value="C:histone deacetylase complex"/>
    <property type="evidence" value="ECO:0000318"/>
    <property type="project" value="GO_Central"/>
</dbReference>
<dbReference type="GO" id="GO:0005654">
    <property type="term" value="C:nucleoplasm"/>
    <property type="evidence" value="ECO:0000304"/>
    <property type="project" value="Reactome"/>
</dbReference>
<dbReference type="GO" id="GO:0031490">
    <property type="term" value="F:chromatin DNA binding"/>
    <property type="evidence" value="ECO:0000318"/>
    <property type="project" value="GO_Central"/>
</dbReference>
<dbReference type="GO" id="GO:0051213">
    <property type="term" value="F:dioxygenase activity"/>
    <property type="evidence" value="ECO:0007669"/>
    <property type="project" value="UniProtKB-KW"/>
</dbReference>
<dbReference type="GO" id="GO:0032454">
    <property type="term" value="F:histone H3K9 demethylase activity"/>
    <property type="evidence" value="ECO:0000318"/>
    <property type="project" value="GO_Central"/>
</dbReference>
<dbReference type="GO" id="GO:0046966">
    <property type="term" value="F:nuclear thyroid hormone receptor binding"/>
    <property type="evidence" value="ECO:0000304"/>
    <property type="project" value="UniProtKB"/>
</dbReference>
<dbReference type="GO" id="GO:0003712">
    <property type="term" value="F:transcription coregulator activity"/>
    <property type="evidence" value="ECO:0000318"/>
    <property type="project" value="GO_Central"/>
</dbReference>
<dbReference type="GO" id="GO:0008270">
    <property type="term" value="F:zinc ion binding"/>
    <property type="evidence" value="ECO:0007669"/>
    <property type="project" value="UniProtKB-KW"/>
</dbReference>
<dbReference type="GO" id="GO:0007596">
    <property type="term" value="P:blood coagulation"/>
    <property type="evidence" value="ECO:0000304"/>
    <property type="project" value="Reactome"/>
</dbReference>
<dbReference type="GO" id="GO:0006355">
    <property type="term" value="P:regulation of DNA-templated transcription"/>
    <property type="evidence" value="ECO:0000304"/>
    <property type="project" value="UniProtKB"/>
</dbReference>
<dbReference type="GO" id="GO:0006357">
    <property type="term" value="P:regulation of transcription by RNA polymerase II"/>
    <property type="evidence" value="ECO:0000318"/>
    <property type="project" value="GO_Central"/>
</dbReference>
<dbReference type="FunFam" id="2.60.120.650:FF:000008">
    <property type="entry name" value="Probable JmjC domain-containing histone demethylation protein 2C"/>
    <property type="match status" value="1"/>
</dbReference>
<dbReference type="Gene3D" id="2.60.120.650">
    <property type="entry name" value="Cupin"/>
    <property type="match status" value="1"/>
</dbReference>
<dbReference type="InterPro" id="IPR054294">
    <property type="entry name" value="DUF7030"/>
</dbReference>
<dbReference type="InterPro" id="IPR045109">
    <property type="entry name" value="JHDM2-like"/>
</dbReference>
<dbReference type="InterPro" id="IPR003347">
    <property type="entry name" value="JmjC_dom"/>
</dbReference>
<dbReference type="InterPro" id="IPR054503">
    <property type="entry name" value="KDM3AB_Tudor"/>
</dbReference>
<dbReference type="InterPro" id="IPR054504">
    <property type="entry name" value="PWWP_KDM3B"/>
</dbReference>
<dbReference type="PANTHER" id="PTHR12549">
    <property type="entry name" value="JMJC DOMAIN-CONTAINING HISTONE DEMETHYLATION PROTEIN"/>
    <property type="match status" value="1"/>
</dbReference>
<dbReference type="PANTHER" id="PTHR12549:SF6">
    <property type="entry name" value="JMJC DOMAIN-CONTAINING HISTONE DEMETHYLATION PROTEIN 2C-RELATED"/>
    <property type="match status" value="1"/>
</dbReference>
<dbReference type="Pfam" id="PF22989">
    <property type="entry name" value="DUF7030"/>
    <property type="match status" value="1"/>
</dbReference>
<dbReference type="Pfam" id="PF02373">
    <property type="entry name" value="JmjC"/>
    <property type="match status" value="1"/>
</dbReference>
<dbReference type="Pfam" id="PF22988">
    <property type="entry name" value="PWWP_KDM3B"/>
    <property type="match status" value="1"/>
</dbReference>
<dbReference type="Pfam" id="PF22987">
    <property type="entry name" value="Tudor_KDM3B"/>
    <property type="match status" value="1"/>
</dbReference>
<dbReference type="SMART" id="SM00558">
    <property type="entry name" value="JmjC"/>
    <property type="match status" value="1"/>
</dbReference>
<dbReference type="SUPFAM" id="SSF51197">
    <property type="entry name" value="Clavaminate synthase-like"/>
    <property type="match status" value="1"/>
</dbReference>
<dbReference type="PROSITE" id="PS51184">
    <property type="entry name" value="JMJC"/>
    <property type="match status" value="1"/>
</dbReference>
<sequence>MAVETRAELVGKRFLCVAVGDEARSERWESGRGWRSWRAGVIRAVSHRDSRNPDLAVYVEFDDLEWDKREWVKVYEDFSTFLVEYHLIWAKRNDPSQTQGSKSKQIQWPALTFKPLVERNIPSSVTAVEFLVDKQLDFLTEDSAFQPYQDDIDSLNPVLRDNPQLHEEVKVWVKEQKVQEIFMQGPYSLNGYRVRVYRQDSATQWFTGIITHHDLFTRTMIVMNDQVLEPQNVDPSMVQMTFLDDVVHSLLKGENIGITSRRRSRANQNVNAVHSHYTRAQANSPRPAMNSQAAVPKQNTHQQQQQRSIRPNKRKGSDSSIPDEEKMKEEKYDYISRGENPKGKNKHLMNKRRKPEEDEKKLNMKRLRTDNVSDFSESSDSENSNKRIIDNSSEQKPENELKNKNTSKINGEEGKPHNNEKAGEETLKNSQPPWDQIQEDKKHEEAEKRKSVDTQLQEDMIIHSSEQSTVSDHNSNDLLPQECNMDKTHTMELLPKEKFVSRPPTPKCVIDITNDTNLEKVAQENSSTFGLQTLQKMDPNVSDSKHSIANAKFLETAKKDSDQSWVSDVVKVDLTQSSVTNASSGNDHLNMEKEKYVSYISPLSAVSVMEDKLHKRSPPPETIKSKLNTSVDTHKIKSSPSPEVVKPKITHSPDSVKSKATYVNSQATGERRLANKIEHELSRCSFHPIPTRSSTLETTKSPLIIDKNEHFTVYRDPALIGSETGANHISPFLSQHPFPLHSSSHRTCLNPGTHHPALTPAPHLLAGSSSQTPLPTINTHPLTSGPHHAVHHPHLLPTVLPGVPTASLLGGHPRLESAHASSLSHLALAHQQQQQLLQHQSPHLLGQAHPSASYNQLGLYPIIWQYPNGTHAYSGLGLPSSKWVHPENAVNAEASLRRNSPSPWLHQPTPVTSADGIGLLSHIPVRPSSAEPHRPLKITAHSSPPLTKTLVDHHKEELERKAFMEPLRSVASTSAKNDLDLNRSQTGKDCHLHRHFVDPVLNQLQRPPQETGERLNKYKEEHRRILQESIDVAPFTTKIKGLEGERENYSRVASSSSSPKSHIIKQDMDVERSVSDLYKMKHSVPQSLPQSNYFTTLSNSVVNEPPRSYPSKEVSNIYGDKQSNALAAAAANPQTLTSFITSLSKPPPLIKHQPESEGLVGKIPEHLPHQIASHSVTTFRNDCRSPTHLTVSSTNTLRSMPALHRAPVFHPPIHHSLERKEGSYSSLSPPTLTPVMPVNAGGKVQESQKPPTLIPEPKDSQANFKSSSEQSLTEMWRPNNNLSKEKTEWHVEKSSGKLQAAMASVIVRPSSSTKTDSMPAMQLASKDRVSERSSAGAHKTDCLKLAEAGETGRIILPNVNSDSVHTKSEKNFQAVSQGSVPSSVMSAVNTMCNTKTDVITSAADTTSVSSWGGSEVISSLSNTILASTSSECVSSKSVSQPVAQKQECKVSTTAPVTLASSKTGSVVQPSSGFSGTTDFIHLKKHKAALAAAQYKSSNASETEPNAIKNQTLSASLPLDSTVICSTINKANSVGNGQASQTSQPNYHTKLKKAWLTRHSEEDKNTNKMENSGNSVSEIIKPCSVNLIASTSSDIQNSVDSKIIVDKYVKDDKVNRRKAKRTYESGSESGDSDESESKSEQRTKRQPKPTYKKKQNDLQKRKGEIEEDLKPNGVLSRSAKERSKLKLQSNSNTGIPRSVLKDWRKVKKLKQTGESFLQDDSCCEIGPNLQKCRECRLIRSKKGEEPAHSPVFCRFYYFRRLSFSKNGVVRIDGFSSPDQYDDEAMSLWTHENFEDDELDIETSKYILDIIGDKFCQLVTSEKTALSWVKKDAKIAWKRAVRGVREMCDACEATLFNIHWVCQKCGFVVCLDCYKAKERKSSRDKELYAWMKCVKGQPHDHKHLMPTQIIPGSVLTDLLDAMHTLREKYGIKSHCHCTNKQNLQVGNFPTMNGVSQVLQNVLNHSNKISLCMPESQQQNTPPKSEKNGGSSPESDVGTDNKLTPPESQSPLHWLADLAEQKAREEKKENKELTLENQIKEEREQDNSESPNGRTSPLVSQNNEQGSTLRDLLTTTAGKLRVGSTDAGIAFAPVYSMGAPSSKSGRTMPNILDDIIASVVENKIPPSKTSKINVKPELKEEPEESIISAVDENNKLYSDIPHSWICEKHILWLKDYKNSSNWKLFKECWKQGQPAVVSGVHKKMNISLWKAESISLDFGDHQADLLNCKDSIISNANVKEFWDGFEEVSKRQKNKSGETVVLKLKDWPSGEDFKTMMPARYEDLLKSLPLPEYCNPEGKFNLASHLPGFFVRPDLGPRLCSAYGVVAAKDHDIGTTNLHIEVSDVVNILVYVGIAKGNGILSKAGILKKFEEEDLDDILRKRLKDSSEIPGALWHIYAGKDVDKIREFLQKISKEQGLEVLPEHDPIRDQSWYVNKKLRQRLLEEYGVRTCTLIQFLGDAIVLPAGALHQVQNFHSCIQVTEDFVSPEHLVESFHLTQELRLLKEEINYDDKLQVKNILYHAVKEMVRALKIHEDEVEDMEEN</sequence>
<gene>
    <name type="primary">JMJD1C</name>
    <name type="synonym">JHDM2C</name>
    <name type="synonym">KIAA1380</name>
    <name type="synonym">TRIP8</name>
</gene>
<accession>Q15652</accession>
<accession>A0T124</accession>
<accession>Q5SQZ8</accession>
<accession>Q5SQZ9</accession>
<accession>Q5SR00</accession>
<accession>Q7Z3E7</accession>
<accession>Q8N3U0</accession>
<accession>Q96KB9</accession>
<accession>Q9P2G7</accession>
<protein>
    <recommendedName>
        <fullName>Probable JmjC domain-containing histone demethylation protein 2C</fullName>
        <ecNumber>1.14.11.-</ecNumber>
    </recommendedName>
    <alternativeName>
        <fullName>Jumonji domain-containing protein 1C</fullName>
    </alternativeName>
    <alternativeName>
        <fullName>Thyroid receptor-interacting protein 8</fullName>
        <shortName>TR-interacting protein 8</shortName>
        <shortName>TRIP-8</shortName>
    </alternativeName>
</protein>
<evidence type="ECO:0000250" key="1"/>
<evidence type="ECO:0000250" key="2">
    <source>
        <dbReference type="UniProtKB" id="Q69ZK6"/>
    </source>
</evidence>
<evidence type="ECO:0000255" key="3"/>
<evidence type="ECO:0000255" key="4">
    <source>
        <dbReference type="PROSITE-ProRule" id="PRU00538"/>
    </source>
</evidence>
<evidence type="ECO:0000256" key="5">
    <source>
        <dbReference type="SAM" id="MobiDB-lite"/>
    </source>
</evidence>
<evidence type="ECO:0000269" key="6">
    <source>
    </source>
</evidence>
<evidence type="ECO:0000269" key="7">
    <source>
    </source>
</evidence>
<evidence type="ECO:0000303" key="8">
    <source>
    </source>
</evidence>
<evidence type="ECO:0000303" key="9">
    <source>
    </source>
</evidence>
<evidence type="ECO:0000305" key="10"/>
<evidence type="ECO:0007744" key="11">
    <source>
    </source>
</evidence>
<evidence type="ECO:0007744" key="12">
    <source>
    </source>
</evidence>
<evidence type="ECO:0007744" key="13">
    <source>
    </source>
</evidence>
<evidence type="ECO:0007744" key="14">
    <source>
    </source>
</evidence>
<evidence type="ECO:0007744" key="15">
    <source>
    </source>
</evidence>
<evidence type="ECO:0007829" key="16">
    <source>
        <dbReference type="PDB" id="5FZO"/>
    </source>
</evidence>
<evidence type="ECO:0007829" key="17">
    <source>
        <dbReference type="PDB" id="9GDK"/>
    </source>
</evidence>
<name>JHD2C_HUMAN</name>
<keyword id="KW-0002">3D-structure</keyword>
<keyword id="KW-0025">Alternative splicing</keyword>
<keyword id="KW-0156">Chromatin regulator</keyword>
<keyword id="KW-0223">Dioxygenase</keyword>
<keyword id="KW-0408">Iron</keyword>
<keyword id="KW-1017">Isopeptide bond</keyword>
<keyword id="KW-0479">Metal-binding</keyword>
<keyword id="KW-0539">Nucleus</keyword>
<keyword id="KW-0560">Oxidoreductase</keyword>
<keyword id="KW-0597">Phosphoprotein</keyword>
<keyword id="KW-1267">Proteomics identification</keyword>
<keyword id="KW-1185">Reference proteome</keyword>
<keyword id="KW-0804">Transcription</keyword>
<keyword id="KW-0805">Transcription regulation</keyword>
<keyword id="KW-0832">Ubl conjugation</keyword>
<keyword id="KW-0862">Zinc</keyword>
<keyword id="KW-0863">Zinc-finger</keyword>